<dbReference type="EMBL" id="Y16788">
    <property type="protein sequence ID" value="CAA76384.1"/>
    <property type="molecule type" value="Genomic_DNA"/>
</dbReference>
<dbReference type="EMBL" id="AJ633621">
    <property type="protein sequence ID" value="CAG17613.2"/>
    <property type="molecule type" value="mRNA"/>
</dbReference>
<dbReference type="EMBL" id="AK314088">
    <property type="protein sequence ID" value="BAG36784.1"/>
    <property type="molecule type" value="mRNA"/>
</dbReference>
<dbReference type="EMBL" id="AC003958">
    <property type="status" value="NOT_ANNOTATED_CDS"/>
    <property type="molecule type" value="Genomic_DNA"/>
</dbReference>
<dbReference type="EMBL" id="CH471152">
    <property type="protein sequence ID" value="EAW60727.1"/>
    <property type="molecule type" value="Genomic_DNA"/>
</dbReference>
<dbReference type="EMBL" id="BC069135">
    <property type="protein sequence ID" value="AAH69135.1"/>
    <property type="molecule type" value="mRNA"/>
</dbReference>
<dbReference type="CCDS" id="CCDS11388.1"/>
<dbReference type="RefSeq" id="NP_004129.2">
    <property type="nucleotide sequence ID" value="NM_004138.3"/>
</dbReference>
<dbReference type="SMR" id="O76009"/>
<dbReference type="BioGRID" id="110081">
    <property type="interactions" value="10"/>
</dbReference>
<dbReference type="FunCoup" id="O76009">
    <property type="interactions" value="184"/>
</dbReference>
<dbReference type="IntAct" id="O76009">
    <property type="interactions" value="5"/>
</dbReference>
<dbReference type="STRING" id="9606.ENSP00000007735"/>
<dbReference type="GlyGen" id="O76009">
    <property type="glycosylation" value="2 sites, 1 N-linked glycan (1 site), 1 O-linked glycan (1 site)"/>
</dbReference>
<dbReference type="iPTMnet" id="O76009"/>
<dbReference type="PhosphoSitePlus" id="O76009"/>
<dbReference type="SwissPalm" id="O76009"/>
<dbReference type="BioMuta" id="KRT33A"/>
<dbReference type="jPOST" id="O76009"/>
<dbReference type="MassIVE" id="O76009"/>
<dbReference type="PaxDb" id="9606-ENSP00000007735"/>
<dbReference type="PeptideAtlas" id="O76009"/>
<dbReference type="ProteomicsDB" id="50342"/>
<dbReference type="Antibodypedia" id="66112">
    <property type="antibodies" value="90 antibodies from 18 providers"/>
</dbReference>
<dbReference type="DNASU" id="3883"/>
<dbReference type="Ensembl" id="ENST00000007735.4">
    <property type="protein sequence ID" value="ENSP00000007735.3"/>
    <property type="gene ID" value="ENSG00000006059.4"/>
</dbReference>
<dbReference type="Ensembl" id="ENST00000576236.1">
    <property type="protein sequence ID" value="ENSP00000461221.1"/>
    <property type="gene ID" value="ENSG00000261986.1"/>
</dbReference>
<dbReference type="Ensembl" id="ENST00000709590.1">
    <property type="protein sequence ID" value="ENSP00000517782.1"/>
    <property type="gene ID" value="ENSG00000292027.1"/>
</dbReference>
<dbReference type="GeneID" id="3883"/>
<dbReference type="KEGG" id="hsa:3883"/>
<dbReference type="MANE-Select" id="ENST00000007735.4">
    <property type="protein sequence ID" value="ENSP00000007735.3"/>
    <property type="RefSeq nucleotide sequence ID" value="NM_004138.4"/>
    <property type="RefSeq protein sequence ID" value="NP_004129.2"/>
</dbReference>
<dbReference type="UCSC" id="uc002hwk.3">
    <property type="organism name" value="human"/>
</dbReference>
<dbReference type="AGR" id="HGNC:6450"/>
<dbReference type="CTD" id="3883"/>
<dbReference type="DisGeNET" id="3883"/>
<dbReference type="GeneCards" id="KRT33A"/>
<dbReference type="HGNC" id="HGNC:6450">
    <property type="gene designation" value="KRT33A"/>
</dbReference>
<dbReference type="HPA" id="ENSG00000006059">
    <property type="expression patterns" value="Tissue enriched (skin)"/>
</dbReference>
<dbReference type="MalaCards" id="KRT33A"/>
<dbReference type="MIM" id="602761">
    <property type="type" value="gene"/>
</dbReference>
<dbReference type="neXtProt" id="NX_O76009"/>
<dbReference type="OpenTargets" id="ENSG00000006059"/>
<dbReference type="PharmGKB" id="PA30239"/>
<dbReference type="VEuPathDB" id="HostDB:ENSG00000006059"/>
<dbReference type="eggNOG" id="ENOG502SNBF">
    <property type="taxonomic scope" value="Eukaryota"/>
</dbReference>
<dbReference type="GeneTree" id="ENSGT00940000153980"/>
<dbReference type="HOGENOM" id="CLU_012560_8_0_1"/>
<dbReference type="InParanoid" id="O76009"/>
<dbReference type="OMA" id="XYETELS"/>
<dbReference type="OrthoDB" id="2441647at2759"/>
<dbReference type="PAN-GO" id="O76009">
    <property type="GO annotations" value="3 GO annotations based on evolutionary models"/>
</dbReference>
<dbReference type="PhylomeDB" id="O76009"/>
<dbReference type="TreeFam" id="TF332742"/>
<dbReference type="PathwayCommons" id="O76009"/>
<dbReference type="Reactome" id="R-HSA-6805567">
    <property type="pathway name" value="Keratinization"/>
</dbReference>
<dbReference type="Reactome" id="R-HSA-6809371">
    <property type="pathway name" value="Formation of the cornified envelope"/>
</dbReference>
<dbReference type="SignaLink" id="O76009"/>
<dbReference type="BioGRID-ORCS" id="3883">
    <property type="hits" value="17 hits in 1135 CRISPR screens"/>
</dbReference>
<dbReference type="GeneWiki" id="KRT33A"/>
<dbReference type="GenomeRNAi" id="3883"/>
<dbReference type="Pharos" id="O76009">
    <property type="development level" value="Tdark"/>
</dbReference>
<dbReference type="PRO" id="PR:O76009"/>
<dbReference type="Proteomes" id="UP000005640">
    <property type="component" value="Chromosome 17"/>
</dbReference>
<dbReference type="RNAct" id="O76009">
    <property type="molecule type" value="protein"/>
</dbReference>
<dbReference type="Bgee" id="ENSG00000006059">
    <property type="expression patterns" value="Expressed in male germ line stem cell (sensu Vertebrata) in testis and 35 other cell types or tissues"/>
</dbReference>
<dbReference type="GO" id="GO:0005856">
    <property type="term" value="C:cytoskeleton"/>
    <property type="evidence" value="ECO:0000318"/>
    <property type="project" value="GO_Central"/>
</dbReference>
<dbReference type="GO" id="GO:0005829">
    <property type="term" value="C:cytosol"/>
    <property type="evidence" value="ECO:0000304"/>
    <property type="project" value="Reactome"/>
</dbReference>
<dbReference type="GO" id="GO:0005615">
    <property type="term" value="C:extracellular space"/>
    <property type="evidence" value="ECO:0007005"/>
    <property type="project" value="UniProtKB"/>
</dbReference>
<dbReference type="GO" id="GO:0005882">
    <property type="term" value="C:intermediate filament"/>
    <property type="evidence" value="ECO:0007669"/>
    <property type="project" value="UniProtKB-KW"/>
</dbReference>
<dbReference type="GO" id="GO:0005198">
    <property type="term" value="F:structural molecule activity"/>
    <property type="evidence" value="ECO:0007669"/>
    <property type="project" value="InterPro"/>
</dbReference>
<dbReference type="GO" id="GO:0030855">
    <property type="term" value="P:epithelial cell differentiation"/>
    <property type="evidence" value="ECO:0000318"/>
    <property type="project" value="GO_Central"/>
</dbReference>
<dbReference type="GO" id="GO:0045109">
    <property type="term" value="P:intermediate filament organization"/>
    <property type="evidence" value="ECO:0000318"/>
    <property type="project" value="GO_Central"/>
</dbReference>
<dbReference type="FunFam" id="1.20.5.1160:FF:000002">
    <property type="entry name" value="Type I keratin 10"/>
    <property type="match status" value="1"/>
</dbReference>
<dbReference type="FunFam" id="1.20.5.170:FF:000002">
    <property type="entry name" value="Type I keratin KA11"/>
    <property type="match status" value="1"/>
</dbReference>
<dbReference type="FunFam" id="1.20.5.500:FF:000001">
    <property type="entry name" value="Type II keratin 23"/>
    <property type="match status" value="1"/>
</dbReference>
<dbReference type="Gene3D" id="1.20.5.170">
    <property type="match status" value="1"/>
</dbReference>
<dbReference type="Gene3D" id="1.20.5.500">
    <property type="entry name" value="Single helix bin"/>
    <property type="match status" value="1"/>
</dbReference>
<dbReference type="Gene3D" id="1.20.5.1160">
    <property type="entry name" value="Vasodilator-stimulated phosphoprotein"/>
    <property type="match status" value="1"/>
</dbReference>
<dbReference type="InterPro" id="IPR018039">
    <property type="entry name" value="IF_conserved"/>
</dbReference>
<dbReference type="InterPro" id="IPR039008">
    <property type="entry name" value="IF_rod_dom"/>
</dbReference>
<dbReference type="InterPro" id="IPR002957">
    <property type="entry name" value="Keratin_I"/>
</dbReference>
<dbReference type="PANTHER" id="PTHR23239">
    <property type="entry name" value="INTERMEDIATE FILAMENT"/>
    <property type="match status" value="1"/>
</dbReference>
<dbReference type="PANTHER" id="PTHR23239:SF98">
    <property type="entry name" value="KERATIN, TYPE I CUTICULAR HA3-I"/>
    <property type="match status" value="1"/>
</dbReference>
<dbReference type="Pfam" id="PF00038">
    <property type="entry name" value="Filament"/>
    <property type="match status" value="1"/>
</dbReference>
<dbReference type="PRINTS" id="PR01248">
    <property type="entry name" value="TYPE1KERATIN"/>
</dbReference>
<dbReference type="SMART" id="SM01391">
    <property type="entry name" value="Filament"/>
    <property type="match status" value="1"/>
</dbReference>
<dbReference type="SUPFAM" id="SSF64593">
    <property type="entry name" value="Intermediate filament protein, coiled coil region"/>
    <property type="match status" value="2"/>
</dbReference>
<dbReference type="PROSITE" id="PS00226">
    <property type="entry name" value="IF_ROD_1"/>
    <property type="match status" value="1"/>
</dbReference>
<dbReference type="PROSITE" id="PS51842">
    <property type="entry name" value="IF_ROD_2"/>
    <property type="match status" value="1"/>
</dbReference>
<evidence type="ECO:0000255" key="1">
    <source>
        <dbReference type="PROSITE-ProRule" id="PRU01188"/>
    </source>
</evidence>
<evidence type="ECO:0000269" key="2">
    <source>
    </source>
</evidence>
<evidence type="ECO:0000269" key="3">
    <source>
    </source>
</evidence>
<evidence type="ECO:0000269" key="4">
    <source>
    </source>
</evidence>
<evidence type="ECO:0000269" key="5">
    <source ref="5"/>
</evidence>
<evidence type="ECO:0000305" key="6"/>
<accession>O76009</accession>
<accession>B2RA87</accession>
<accession>Q6NTB9</accession>
<accession>Q6ZZB9</accession>
<name>KT33A_HUMAN</name>
<reference key="1">
    <citation type="journal article" date="1998" name="J. Biol. Chem.">
        <title>Characterization of a 190-kilobase pair domain of human type I hair keratin genes.</title>
        <authorList>
            <person name="Rogers M.A."/>
            <person name="Winter H."/>
            <person name="Wolf C."/>
            <person name="Heck M."/>
            <person name="Schweizer J."/>
        </authorList>
    </citation>
    <scope>NUCLEOTIDE SEQUENCE [GENOMIC DNA]</scope>
    <scope>TISSUE SPECIFICITY</scope>
</reference>
<reference key="2">
    <citation type="journal article" date="2004" name="Differentiation">
        <title>The human type I keratin gene family: characterization of new hair follicle specific members and evaluation of the chromosome 17q21.2 gene domain.</title>
        <authorList>
            <person name="Rogers M.A."/>
            <person name="Winter H."/>
            <person name="Langbein L."/>
            <person name="Bleiler R."/>
            <person name="Schweizer J."/>
        </authorList>
    </citation>
    <scope>NUCLEOTIDE SEQUENCE [MRNA]</scope>
    <source>
        <tissue>Scalp</tissue>
    </source>
</reference>
<reference key="3">
    <citation type="journal article" date="2004" name="Nat. Genet.">
        <title>Complete sequencing and characterization of 21,243 full-length human cDNAs.</title>
        <authorList>
            <person name="Ota T."/>
            <person name="Suzuki Y."/>
            <person name="Nishikawa T."/>
            <person name="Otsuki T."/>
            <person name="Sugiyama T."/>
            <person name="Irie R."/>
            <person name="Wakamatsu A."/>
            <person name="Hayashi K."/>
            <person name="Sato H."/>
            <person name="Nagai K."/>
            <person name="Kimura K."/>
            <person name="Makita H."/>
            <person name="Sekine M."/>
            <person name="Obayashi M."/>
            <person name="Nishi T."/>
            <person name="Shibahara T."/>
            <person name="Tanaka T."/>
            <person name="Ishii S."/>
            <person name="Yamamoto J."/>
            <person name="Saito K."/>
            <person name="Kawai Y."/>
            <person name="Isono Y."/>
            <person name="Nakamura Y."/>
            <person name="Nagahari K."/>
            <person name="Murakami K."/>
            <person name="Yasuda T."/>
            <person name="Iwayanagi T."/>
            <person name="Wagatsuma M."/>
            <person name="Shiratori A."/>
            <person name="Sudo H."/>
            <person name="Hosoiri T."/>
            <person name="Kaku Y."/>
            <person name="Kodaira H."/>
            <person name="Kondo H."/>
            <person name="Sugawara M."/>
            <person name="Takahashi M."/>
            <person name="Kanda K."/>
            <person name="Yokoi T."/>
            <person name="Furuya T."/>
            <person name="Kikkawa E."/>
            <person name="Omura Y."/>
            <person name="Abe K."/>
            <person name="Kamihara K."/>
            <person name="Katsuta N."/>
            <person name="Sato K."/>
            <person name="Tanikawa M."/>
            <person name="Yamazaki M."/>
            <person name="Ninomiya K."/>
            <person name="Ishibashi T."/>
            <person name="Yamashita H."/>
            <person name="Murakawa K."/>
            <person name="Fujimori K."/>
            <person name="Tanai H."/>
            <person name="Kimata M."/>
            <person name="Watanabe M."/>
            <person name="Hiraoka S."/>
            <person name="Chiba Y."/>
            <person name="Ishida S."/>
            <person name="Ono Y."/>
            <person name="Takiguchi S."/>
            <person name="Watanabe S."/>
            <person name="Yosida M."/>
            <person name="Hotuta T."/>
            <person name="Kusano J."/>
            <person name="Kanehori K."/>
            <person name="Takahashi-Fujii A."/>
            <person name="Hara H."/>
            <person name="Tanase T.-O."/>
            <person name="Nomura Y."/>
            <person name="Togiya S."/>
            <person name="Komai F."/>
            <person name="Hara R."/>
            <person name="Takeuchi K."/>
            <person name="Arita M."/>
            <person name="Imose N."/>
            <person name="Musashino K."/>
            <person name="Yuuki H."/>
            <person name="Oshima A."/>
            <person name="Sasaki N."/>
            <person name="Aotsuka S."/>
            <person name="Yoshikawa Y."/>
            <person name="Matsunawa H."/>
            <person name="Ichihara T."/>
            <person name="Shiohata N."/>
            <person name="Sano S."/>
            <person name="Moriya S."/>
            <person name="Momiyama H."/>
            <person name="Satoh N."/>
            <person name="Takami S."/>
            <person name="Terashima Y."/>
            <person name="Suzuki O."/>
            <person name="Nakagawa S."/>
            <person name="Senoh A."/>
            <person name="Mizoguchi H."/>
            <person name="Goto Y."/>
            <person name="Shimizu F."/>
            <person name="Wakebe H."/>
            <person name="Hishigaki H."/>
            <person name="Watanabe T."/>
            <person name="Sugiyama A."/>
            <person name="Takemoto M."/>
            <person name="Kawakami B."/>
            <person name="Yamazaki M."/>
            <person name="Watanabe K."/>
            <person name="Kumagai A."/>
            <person name="Itakura S."/>
            <person name="Fukuzumi Y."/>
            <person name="Fujimori Y."/>
            <person name="Komiyama M."/>
            <person name="Tashiro H."/>
            <person name="Tanigami A."/>
            <person name="Fujiwara T."/>
            <person name="Ono T."/>
            <person name="Yamada K."/>
            <person name="Fujii Y."/>
            <person name="Ozaki K."/>
            <person name="Hirao M."/>
            <person name="Ohmori Y."/>
            <person name="Kawabata A."/>
            <person name="Hikiji T."/>
            <person name="Kobatake N."/>
            <person name="Inagaki H."/>
            <person name="Ikema Y."/>
            <person name="Okamoto S."/>
            <person name="Okitani R."/>
            <person name="Kawakami T."/>
            <person name="Noguchi S."/>
            <person name="Itoh T."/>
            <person name="Shigeta K."/>
            <person name="Senba T."/>
            <person name="Matsumura K."/>
            <person name="Nakajima Y."/>
            <person name="Mizuno T."/>
            <person name="Morinaga M."/>
            <person name="Sasaki M."/>
            <person name="Togashi T."/>
            <person name="Oyama M."/>
            <person name="Hata H."/>
            <person name="Watanabe M."/>
            <person name="Komatsu T."/>
            <person name="Mizushima-Sugano J."/>
            <person name="Satoh T."/>
            <person name="Shirai Y."/>
            <person name="Takahashi Y."/>
            <person name="Nakagawa K."/>
            <person name="Okumura K."/>
            <person name="Nagase T."/>
            <person name="Nomura N."/>
            <person name="Kikuchi H."/>
            <person name="Masuho Y."/>
            <person name="Yamashita R."/>
            <person name="Nakai K."/>
            <person name="Yada T."/>
            <person name="Nakamura Y."/>
            <person name="Ohara O."/>
            <person name="Isogai T."/>
            <person name="Sugano S."/>
        </authorList>
    </citation>
    <scope>NUCLEOTIDE SEQUENCE [LARGE SCALE MRNA]</scope>
    <scope>VARIANT VAL-270</scope>
    <source>
        <tissue>Testis</tissue>
    </source>
</reference>
<reference key="4">
    <citation type="journal article" date="2006" name="Nature">
        <title>DNA sequence of human chromosome 17 and analysis of rearrangement in the human lineage.</title>
        <authorList>
            <person name="Zody M.C."/>
            <person name="Garber M."/>
            <person name="Adams D.J."/>
            <person name="Sharpe T."/>
            <person name="Harrow J."/>
            <person name="Lupski J.R."/>
            <person name="Nicholson C."/>
            <person name="Searle S.M."/>
            <person name="Wilming L."/>
            <person name="Young S.K."/>
            <person name="Abouelleil A."/>
            <person name="Allen N.R."/>
            <person name="Bi W."/>
            <person name="Bloom T."/>
            <person name="Borowsky M.L."/>
            <person name="Bugalter B.E."/>
            <person name="Butler J."/>
            <person name="Chang J.L."/>
            <person name="Chen C.-K."/>
            <person name="Cook A."/>
            <person name="Corum B."/>
            <person name="Cuomo C.A."/>
            <person name="de Jong P.J."/>
            <person name="DeCaprio D."/>
            <person name="Dewar K."/>
            <person name="FitzGerald M."/>
            <person name="Gilbert J."/>
            <person name="Gibson R."/>
            <person name="Gnerre S."/>
            <person name="Goldstein S."/>
            <person name="Grafham D.V."/>
            <person name="Grocock R."/>
            <person name="Hafez N."/>
            <person name="Hagopian D.S."/>
            <person name="Hart E."/>
            <person name="Norman C.H."/>
            <person name="Humphray S."/>
            <person name="Jaffe D.B."/>
            <person name="Jones M."/>
            <person name="Kamal M."/>
            <person name="Khodiyar V.K."/>
            <person name="LaButti K."/>
            <person name="Laird G."/>
            <person name="Lehoczky J."/>
            <person name="Liu X."/>
            <person name="Lokyitsang T."/>
            <person name="Loveland J."/>
            <person name="Lui A."/>
            <person name="Macdonald P."/>
            <person name="Major J.E."/>
            <person name="Matthews L."/>
            <person name="Mauceli E."/>
            <person name="McCarroll S.A."/>
            <person name="Mihalev A.H."/>
            <person name="Mudge J."/>
            <person name="Nguyen C."/>
            <person name="Nicol R."/>
            <person name="O'Leary S.B."/>
            <person name="Osoegawa K."/>
            <person name="Schwartz D.C."/>
            <person name="Shaw-Smith C."/>
            <person name="Stankiewicz P."/>
            <person name="Steward C."/>
            <person name="Swarbreck D."/>
            <person name="Venkataraman V."/>
            <person name="Whittaker C.A."/>
            <person name="Yang X."/>
            <person name="Zimmer A.R."/>
            <person name="Bradley A."/>
            <person name="Hubbard T."/>
            <person name="Birren B.W."/>
            <person name="Rogers J."/>
            <person name="Lander E.S."/>
            <person name="Nusbaum C."/>
        </authorList>
    </citation>
    <scope>NUCLEOTIDE SEQUENCE [LARGE SCALE GENOMIC DNA]</scope>
</reference>
<reference key="5">
    <citation type="submission" date="2005-07" db="EMBL/GenBank/DDBJ databases">
        <authorList>
            <person name="Mural R.J."/>
            <person name="Istrail S."/>
            <person name="Sutton G.G."/>
            <person name="Florea L."/>
            <person name="Halpern A.L."/>
            <person name="Mobarry C.M."/>
            <person name="Lippert R."/>
            <person name="Walenz B."/>
            <person name="Shatkay H."/>
            <person name="Dew I."/>
            <person name="Miller J.R."/>
            <person name="Flanigan M.J."/>
            <person name="Edwards N.J."/>
            <person name="Bolanos R."/>
            <person name="Fasulo D."/>
            <person name="Halldorsson B.V."/>
            <person name="Hannenhalli S."/>
            <person name="Turner R."/>
            <person name="Yooseph S."/>
            <person name="Lu F."/>
            <person name="Nusskern D.R."/>
            <person name="Shue B.C."/>
            <person name="Zheng X.H."/>
            <person name="Zhong F."/>
            <person name="Delcher A.L."/>
            <person name="Huson D.H."/>
            <person name="Kravitz S.A."/>
            <person name="Mouchard L."/>
            <person name="Reinert K."/>
            <person name="Remington K.A."/>
            <person name="Clark A.G."/>
            <person name="Waterman M.S."/>
            <person name="Eichler E.E."/>
            <person name="Adams M.D."/>
            <person name="Hunkapiller M.W."/>
            <person name="Myers E.W."/>
            <person name="Venter J.C."/>
        </authorList>
    </citation>
    <scope>NUCLEOTIDE SEQUENCE [LARGE SCALE GENOMIC DNA]</scope>
    <scope>VARIANT VAL-270</scope>
</reference>
<reference key="6">
    <citation type="journal article" date="2004" name="Genome Res.">
        <title>The status, quality, and expansion of the NIH full-length cDNA project: the Mammalian Gene Collection (MGC).</title>
        <authorList>
            <consortium name="The MGC Project Team"/>
        </authorList>
    </citation>
    <scope>NUCLEOTIDE SEQUENCE [LARGE SCALE MRNA]</scope>
    <scope>VARIANT VAL-270</scope>
</reference>
<proteinExistence type="evidence at protein level"/>
<organism>
    <name type="scientific">Homo sapiens</name>
    <name type="common">Human</name>
    <dbReference type="NCBI Taxonomy" id="9606"/>
    <lineage>
        <taxon>Eukaryota</taxon>
        <taxon>Metazoa</taxon>
        <taxon>Chordata</taxon>
        <taxon>Craniata</taxon>
        <taxon>Vertebrata</taxon>
        <taxon>Euteleostomi</taxon>
        <taxon>Mammalia</taxon>
        <taxon>Eutheria</taxon>
        <taxon>Euarchontoglires</taxon>
        <taxon>Primates</taxon>
        <taxon>Haplorrhini</taxon>
        <taxon>Catarrhini</taxon>
        <taxon>Hominidae</taxon>
        <taxon>Homo</taxon>
    </lineage>
</organism>
<feature type="chain" id="PRO_0000063688" description="Keratin, type I cuticular Ha3-I">
    <location>
        <begin position="1"/>
        <end position="404"/>
    </location>
</feature>
<feature type="domain" description="IF rod" evidence="1">
    <location>
        <begin position="56"/>
        <end position="367"/>
    </location>
</feature>
<feature type="region of interest" description="Head">
    <location>
        <begin position="1"/>
        <end position="56"/>
    </location>
</feature>
<feature type="region of interest" description="Coil 1A">
    <location>
        <begin position="57"/>
        <end position="91"/>
    </location>
</feature>
<feature type="region of interest" description="Linker 1">
    <location>
        <begin position="92"/>
        <end position="102"/>
    </location>
</feature>
<feature type="region of interest" description="Coil 1B">
    <location>
        <begin position="103"/>
        <end position="203"/>
    </location>
</feature>
<feature type="region of interest" description="Linker 12">
    <location>
        <begin position="204"/>
        <end position="219"/>
    </location>
</feature>
<feature type="region of interest" description="Coil 2">
    <location>
        <begin position="220"/>
        <end position="363"/>
    </location>
</feature>
<feature type="region of interest" description="Tail">
    <location>
        <begin position="364"/>
        <end position="404"/>
    </location>
</feature>
<feature type="site" description="Stutter">
    <location>
        <position position="305"/>
    </location>
</feature>
<feature type="sequence variant" id="VAR_054432" description="In dbSNP:rs12937519." evidence="2 3 5">
    <original>A</original>
    <variation>V</variation>
    <location>
        <position position="270"/>
    </location>
</feature>
<feature type="sequence conflict" description="In Ref. 3; BAG36784." evidence="6" ref="3">
    <original>A</original>
    <variation>T</variation>
    <location>
        <position position="82"/>
    </location>
</feature>
<feature type="sequence conflict" description="In Ref. 2; CAG17613." evidence="6" ref="2">
    <original>Q</original>
    <variation>R</variation>
    <location>
        <position position="94"/>
    </location>
</feature>
<feature type="sequence conflict" description="In Ref. 1; CAA76384." evidence="6" ref="1">
    <original>QL</original>
    <variation>HV</variation>
    <location>
        <begin position="153"/>
        <end position="154"/>
    </location>
</feature>
<comment type="tissue specificity">
    <text evidence="4">Expressed in the hair follicles.</text>
</comment>
<comment type="miscellaneous">
    <text>There are two types of hair/microfibrillar keratin, I (acidic) and II (neutral to basic).</text>
</comment>
<comment type="similarity">
    <text evidence="1">Belongs to the intermediate filament family.</text>
</comment>
<sequence length="404" mass="45940">MSYSCGLPSLSCRTSCSSRPCVPPSCHGCTLPGACNIPANVSNCNWFCEGSFNGSEKETMQFLNDRLASYLEKVRQLERDNAELENLIRERSQQQEPLVCASYQSYFKTIEELQQKILCSKSENARLVVQIDNAKLASDDFRTKYETELSLRQLVESDINGLRRILDELTLCRSDLEAQVESLKEELLCLKQNHEQEVNTLRCQLGDRLNVEVDAAPTVDLNQVLNETRSQYEALVETNRREVEQWFATQTEELNKQVVSSSEQLQSYQAEIIELRRTVNALEIELQAQHNLRDSLENTLTESEARYSSQLSQVQRLITNVESQLAEIRSDLERQNQEYQVLLDVRARLECEINTYRSLLESEDCKLPSNPCATTNACDKSTGPCISNPCGLRARCGPCNTFGY</sequence>
<keyword id="KW-0175">Coiled coil</keyword>
<keyword id="KW-0403">Intermediate filament</keyword>
<keyword id="KW-0416">Keratin</keyword>
<keyword id="KW-1267">Proteomics identification</keyword>
<keyword id="KW-1185">Reference proteome</keyword>
<gene>
    <name type="primary">KRT33A</name>
    <name type="synonym">HHA3-I</name>
    <name type="synonym">HKA3A</name>
    <name type="synonym">KRTHA3A</name>
</gene>
<protein>
    <recommendedName>
        <fullName>Keratin, type I cuticular Ha3-I</fullName>
    </recommendedName>
    <alternativeName>
        <fullName>Hair keratin, type I Ha3-I</fullName>
    </alternativeName>
    <alternativeName>
        <fullName>Keratin-33A</fullName>
        <shortName>K33A</shortName>
    </alternativeName>
</protein>